<comment type="function">
    <text evidence="1">TFIIF is a general transcription initiation factor that binds to RNA polymerase II and helps to recruit it to the initiation complex in collaboration with TFIIB.</text>
</comment>
<comment type="subunit">
    <text>Heterodimer of an alpha and a beta subunit.</text>
</comment>
<comment type="subcellular location">
    <subcellularLocation>
        <location>Nucleus</location>
    </subcellularLocation>
</comment>
<comment type="similarity">
    <text evidence="2">Belongs to the TFIIF beta subunit family.</text>
</comment>
<keyword id="KW-0238">DNA-binding</keyword>
<keyword id="KW-0539">Nucleus</keyword>
<keyword id="KW-1185">Reference proteome</keyword>
<keyword id="KW-0804">Transcription</keyword>
<keyword id="KW-0805">Transcription regulation</keyword>
<organism>
    <name type="scientific">Drosophila melanogaster</name>
    <name type="common">Fruit fly</name>
    <dbReference type="NCBI Taxonomy" id="7227"/>
    <lineage>
        <taxon>Eukaryota</taxon>
        <taxon>Metazoa</taxon>
        <taxon>Ecdysozoa</taxon>
        <taxon>Arthropoda</taxon>
        <taxon>Hexapoda</taxon>
        <taxon>Insecta</taxon>
        <taxon>Pterygota</taxon>
        <taxon>Neoptera</taxon>
        <taxon>Endopterygota</taxon>
        <taxon>Diptera</taxon>
        <taxon>Brachycera</taxon>
        <taxon>Muscomorpha</taxon>
        <taxon>Ephydroidea</taxon>
        <taxon>Drosophilidae</taxon>
        <taxon>Drosophila</taxon>
        <taxon>Sophophora</taxon>
    </lineage>
</organism>
<name>T2FB_DROME</name>
<protein>
    <recommendedName>
        <fullName>General transcription factor IIF subunit 2</fullName>
    </recommendedName>
    <alternativeName>
        <fullName>Transcription initiation factor IIF subunit beta</fullName>
        <shortName>TFIIF-beta</shortName>
    </alternativeName>
</protein>
<sequence length="277" mass="32107">MSKEDKEKTQIIDKDLDLSNAGRGVWLVKVPKYIAQKWEKAPTNMDVGKLRINKTPGQKAQVSLSLTPAVLALDPEEKIPTEHILDVSQVTKQTLGVFSHMAPSDGKENSTTSAAQPDNEKLYMEGRIVQKLECRPIADNCYMKLKLESIRKASEPQRRVQPIDKIVQNFKPVKDHAHNIEYRERKKAEGKKARDDKNAVMDMLFHAFEKHQYYNIKDLVKITNQPISYLKEILKDVCDYNMKNPHKNMWELKKEYRHYKTEEKKEEEHKSGSSDSE</sequence>
<gene>
    <name type="primary">TfIIFbeta</name>
    <name type="synonym">TFIIF30</name>
    <name type="ORF">CG6538</name>
</gene>
<dbReference type="EMBL" id="U25188">
    <property type="protein sequence ID" value="AAA86888.1"/>
    <property type="molecule type" value="mRNA"/>
</dbReference>
<dbReference type="EMBL" id="U02461">
    <property type="protein sequence ID" value="AAA81888.1"/>
    <property type="molecule type" value="mRNA"/>
</dbReference>
<dbReference type="EMBL" id="AE014297">
    <property type="protein sequence ID" value="AAF54548.1"/>
    <property type="molecule type" value="Genomic_DNA"/>
</dbReference>
<dbReference type="EMBL" id="AY071514">
    <property type="protein sequence ID" value="AAL49136.1"/>
    <property type="molecule type" value="mRNA"/>
</dbReference>
<dbReference type="PIR" id="S57336">
    <property type="entry name" value="S57336"/>
</dbReference>
<dbReference type="RefSeq" id="NP_524305.2">
    <property type="nucleotide sequence ID" value="NM_079581.4"/>
</dbReference>
<dbReference type="SMR" id="P41900"/>
<dbReference type="BioGRID" id="66434">
    <property type="interactions" value="12"/>
</dbReference>
<dbReference type="ComplexPortal" id="CPX-2255">
    <property type="entry name" value="General transcription factor TFIIF complex"/>
</dbReference>
<dbReference type="FunCoup" id="P41900">
    <property type="interactions" value="1859"/>
</dbReference>
<dbReference type="IntAct" id="P41900">
    <property type="interactions" value="5"/>
</dbReference>
<dbReference type="STRING" id="7227.FBpp0081786"/>
<dbReference type="PaxDb" id="7227-FBpp0081786"/>
<dbReference type="DNASU" id="41290"/>
<dbReference type="EnsemblMetazoa" id="FBtr0082310">
    <property type="protein sequence ID" value="FBpp0081786"/>
    <property type="gene ID" value="FBgn0010421"/>
</dbReference>
<dbReference type="GeneID" id="41290"/>
<dbReference type="KEGG" id="dme:Dmel_CG6538"/>
<dbReference type="AGR" id="FB:FBgn0010421"/>
<dbReference type="CTD" id="41290"/>
<dbReference type="FlyBase" id="FBgn0010421">
    <property type="gene designation" value="TfIIFbeta"/>
</dbReference>
<dbReference type="VEuPathDB" id="VectorBase:FBgn0010421"/>
<dbReference type="eggNOG" id="KOG2905">
    <property type="taxonomic scope" value="Eukaryota"/>
</dbReference>
<dbReference type="GeneTree" id="ENSGT00390000016051"/>
<dbReference type="HOGENOM" id="CLU_047858_1_0_1"/>
<dbReference type="InParanoid" id="P41900"/>
<dbReference type="OMA" id="PIADNCY"/>
<dbReference type="OrthoDB" id="26094at2759"/>
<dbReference type="PhylomeDB" id="P41900"/>
<dbReference type="Reactome" id="R-DME-112382">
    <property type="pathway name" value="Formation of RNA Pol II elongation complex"/>
</dbReference>
<dbReference type="Reactome" id="R-DME-113418">
    <property type="pathway name" value="Formation of the Early Elongation Complex"/>
</dbReference>
<dbReference type="Reactome" id="R-DME-674695">
    <property type="pathway name" value="RNA Polymerase II Pre-transcription Events"/>
</dbReference>
<dbReference type="Reactome" id="R-DME-6796648">
    <property type="pathway name" value="TP53 Regulates Transcription of DNA Repair Genes"/>
</dbReference>
<dbReference type="Reactome" id="R-DME-6807505">
    <property type="pathway name" value="RNA polymerase II transcribes snRNA genes"/>
</dbReference>
<dbReference type="Reactome" id="R-DME-72086">
    <property type="pathway name" value="mRNA Capping"/>
</dbReference>
<dbReference type="Reactome" id="R-DME-72163">
    <property type="pathway name" value="mRNA Splicing - Major Pathway"/>
</dbReference>
<dbReference type="Reactome" id="R-DME-72165">
    <property type="pathway name" value="mRNA Splicing - Minor Pathway"/>
</dbReference>
<dbReference type="Reactome" id="R-DME-72203">
    <property type="pathway name" value="Processing of Capped Intron-Containing Pre-mRNA"/>
</dbReference>
<dbReference type="Reactome" id="R-DME-73776">
    <property type="pathway name" value="RNA Polymerase II Promoter Escape"/>
</dbReference>
<dbReference type="Reactome" id="R-DME-73779">
    <property type="pathway name" value="RNA Polymerase II Transcription Pre-Initiation And Promoter Opening"/>
</dbReference>
<dbReference type="Reactome" id="R-DME-75953">
    <property type="pathway name" value="RNA Polymerase II Transcription Initiation"/>
</dbReference>
<dbReference type="Reactome" id="R-DME-75955">
    <property type="pathway name" value="RNA Polymerase II Transcription Elongation"/>
</dbReference>
<dbReference type="Reactome" id="R-DME-76042">
    <property type="pathway name" value="RNA Polymerase II Transcription Initiation And Promoter Clearance"/>
</dbReference>
<dbReference type="Reactome" id="R-DME-77075">
    <property type="pathway name" value="RNA Pol II CTD phosphorylation and interaction with CE"/>
</dbReference>
<dbReference type="Reactome" id="R-DME-9018519">
    <property type="pathway name" value="Estrogen-dependent gene expression"/>
</dbReference>
<dbReference type="SignaLink" id="P41900"/>
<dbReference type="BioGRID-ORCS" id="41290">
    <property type="hits" value="1 hit in 1 CRISPR screen"/>
</dbReference>
<dbReference type="GenomeRNAi" id="41290"/>
<dbReference type="PRO" id="PR:P41900"/>
<dbReference type="Proteomes" id="UP000000803">
    <property type="component" value="Chromosome 3R"/>
</dbReference>
<dbReference type="Bgee" id="FBgn0010421">
    <property type="expression patterns" value="Expressed in egg chamber and 70 other cell types or tissues"/>
</dbReference>
<dbReference type="GO" id="GO:0005634">
    <property type="term" value="C:nucleus"/>
    <property type="evidence" value="ECO:0000314"/>
    <property type="project" value="FlyBase"/>
</dbReference>
<dbReference type="GO" id="GO:0005674">
    <property type="term" value="C:transcription factor TFIIF complex"/>
    <property type="evidence" value="ECO:0000314"/>
    <property type="project" value="FlyBase"/>
</dbReference>
<dbReference type="GO" id="GO:0003677">
    <property type="term" value="F:DNA binding"/>
    <property type="evidence" value="ECO:0007669"/>
    <property type="project" value="UniProtKB-KW"/>
</dbReference>
<dbReference type="GO" id="GO:0001096">
    <property type="term" value="F:TFIIF-class transcription factor complex binding"/>
    <property type="evidence" value="ECO:0000353"/>
    <property type="project" value="FlyBase"/>
</dbReference>
<dbReference type="GO" id="GO:0006366">
    <property type="term" value="P:transcription by RNA polymerase II"/>
    <property type="evidence" value="ECO:0000314"/>
    <property type="project" value="FlyBase"/>
</dbReference>
<dbReference type="GO" id="GO:0006368">
    <property type="term" value="P:transcription elongation by RNA polymerase II"/>
    <property type="evidence" value="ECO:0000314"/>
    <property type="project" value="FlyBase"/>
</dbReference>
<dbReference type="GO" id="GO:0006367">
    <property type="term" value="P:transcription initiation at RNA polymerase II promoter"/>
    <property type="evidence" value="ECO:0000314"/>
    <property type="project" value="FlyBase"/>
</dbReference>
<dbReference type="CDD" id="cd07980">
    <property type="entry name" value="TFIIF_beta"/>
    <property type="match status" value="1"/>
</dbReference>
<dbReference type="FunFam" id="1.10.10.10:FF:000035">
    <property type="entry name" value="General transcription factor IIF subunit 2"/>
    <property type="match status" value="1"/>
</dbReference>
<dbReference type="Gene3D" id="1.10.10.10">
    <property type="entry name" value="Winged helix-like DNA-binding domain superfamily/Winged helix DNA-binding domain"/>
    <property type="match status" value="1"/>
</dbReference>
<dbReference type="InterPro" id="IPR003196">
    <property type="entry name" value="TFIIF_beta"/>
</dbReference>
<dbReference type="InterPro" id="IPR040450">
    <property type="entry name" value="TFIIF_beta_HTH"/>
</dbReference>
<dbReference type="InterPro" id="IPR040504">
    <property type="entry name" value="TFIIF_beta_N"/>
</dbReference>
<dbReference type="InterPro" id="IPR011039">
    <property type="entry name" value="TFIIF_interaction"/>
</dbReference>
<dbReference type="InterPro" id="IPR036388">
    <property type="entry name" value="WH-like_DNA-bd_sf"/>
</dbReference>
<dbReference type="InterPro" id="IPR036390">
    <property type="entry name" value="WH_DNA-bd_sf"/>
</dbReference>
<dbReference type="PANTHER" id="PTHR10445">
    <property type="entry name" value="GENERAL TRANSCRIPTION FACTOR IIF SUBUNIT 2"/>
    <property type="match status" value="1"/>
</dbReference>
<dbReference type="PANTHER" id="PTHR10445:SF0">
    <property type="entry name" value="GENERAL TRANSCRIPTION FACTOR IIF SUBUNIT 2"/>
    <property type="match status" value="1"/>
</dbReference>
<dbReference type="Pfam" id="PF02270">
    <property type="entry name" value="TFIIF_beta"/>
    <property type="match status" value="1"/>
</dbReference>
<dbReference type="Pfam" id="PF17683">
    <property type="entry name" value="TFIIF_beta_N"/>
    <property type="match status" value="1"/>
</dbReference>
<dbReference type="PIRSF" id="PIRSF015849">
    <property type="entry name" value="TFIIF-beta"/>
    <property type="match status" value="1"/>
</dbReference>
<dbReference type="SUPFAM" id="SSF50916">
    <property type="entry name" value="Rap30/74 interaction domains"/>
    <property type="match status" value="1"/>
</dbReference>
<dbReference type="SUPFAM" id="SSF46785">
    <property type="entry name" value="Winged helix' DNA-binding domain"/>
    <property type="match status" value="1"/>
</dbReference>
<reference key="1">
    <citation type="journal article" date="1995" name="Nucleic Acids Res.">
        <title>Molecular cloning of cDNA encoding the small subunit of Drosophila transcription initiation factor TFIIF.</title>
        <authorList>
            <person name="Gong D.-W."/>
            <person name="Mortin M.A."/>
            <person name="Horikoshi M."/>
            <person name="Nakatani Y."/>
        </authorList>
    </citation>
    <scope>NUCLEOTIDE SEQUENCE [MRNA]</scope>
</reference>
<reference key="2">
    <citation type="journal article" date="1995" name="J. Biol. Chem.">
        <title>Structure and function of the small subunit of TFIIF (RAP30) from Drosophila melanogaster.</title>
        <authorList>
            <person name="Frank D.J."/>
            <person name="Tyree C.M."/>
            <person name="George C.P."/>
            <person name="Kadonaga J.T."/>
        </authorList>
    </citation>
    <scope>NUCLEOTIDE SEQUENCE [MRNA]</scope>
    <scope>FUNCTION</scope>
    <source>
        <strain>Canton-S</strain>
    </source>
</reference>
<reference key="3">
    <citation type="journal article" date="2000" name="Science">
        <title>The genome sequence of Drosophila melanogaster.</title>
        <authorList>
            <person name="Adams M.D."/>
            <person name="Celniker S.E."/>
            <person name="Holt R.A."/>
            <person name="Evans C.A."/>
            <person name="Gocayne J.D."/>
            <person name="Amanatides P.G."/>
            <person name="Scherer S.E."/>
            <person name="Li P.W."/>
            <person name="Hoskins R.A."/>
            <person name="Galle R.F."/>
            <person name="George R.A."/>
            <person name="Lewis S.E."/>
            <person name="Richards S."/>
            <person name="Ashburner M."/>
            <person name="Henderson S.N."/>
            <person name="Sutton G.G."/>
            <person name="Wortman J.R."/>
            <person name="Yandell M.D."/>
            <person name="Zhang Q."/>
            <person name="Chen L.X."/>
            <person name="Brandon R.C."/>
            <person name="Rogers Y.-H.C."/>
            <person name="Blazej R.G."/>
            <person name="Champe M."/>
            <person name="Pfeiffer B.D."/>
            <person name="Wan K.H."/>
            <person name="Doyle C."/>
            <person name="Baxter E.G."/>
            <person name="Helt G."/>
            <person name="Nelson C.R."/>
            <person name="Miklos G.L.G."/>
            <person name="Abril J.F."/>
            <person name="Agbayani A."/>
            <person name="An H.-J."/>
            <person name="Andrews-Pfannkoch C."/>
            <person name="Baldwin D."/>
            <person name="Ballew R.M."/>
            <person name="Basu A."/>
            <person name="Baxendale J."/>
            <person name="Bayraktaroglu L."/>
            <person name="Beasley E.M."/>
            <person name="Beeson K.Y."/>
            <person name="Benos P.V."/>
            <person name="Berman B.P."/>
            <person name="Bhandari D."/>
            <person name="Bolshakov S."/>
            <person name="Borkova D."/>
            <person name="Botchan M.R."/>
            <person name="Bouck J."/>
            <person name="Brokstein P."/>
            <person name="Brottier P."/>
            <person name="Burtis K.C."/>
            <person name="Busam D.A."/>
            <person name="Butler H."/>
            <person name="Cadieu E."/>
            <person name="Center A."/>
            <person name="Chandra I."/>
            <person name="Cherry J.M."/>
            <person name="Cawley S."/>
            <person name="Dahlke C."/>
            <person name="Davenport L.B."/>
            <person name="Davies P."/>
            <person name="de Pablos B."/>
            <person name="Delcher A."/>
            <person name="Deng Z."/>
            <person name="Mays A.D."/>
            <person name="Dew I."/>
            <person name="Dietz S.M."/>
            <person name="Dodson K."/>
            <person name="Doup L.E."/>
            <person name="Downes M."/>
            <person name="Dugan-Rocha S."/>
            <person name="Dunkov B.C."/>
            <person name="Dunn P."/>
            <person name="Durbin K.J."/>
            <person name="Evangelista C.C."/>
            <person name="Ferraz C."/>
            <person name="Ferriera S."/>
            <person name="Fleischmann W."/>
            <person name="Fosler C."/>
            <person name="Gabrielian A.E."/>
            <person name="Garg N.S."/>
            <person name="Gelbart W.M."/>
            <person name="Glasser K."/>
            <person name="Glodek A."/>
            <person name="Gong F."/>
            <person name="Gorrell J.H."/>
            <person name="Gu Z."/>
            <person name="Guan P."/>
            <person name="Harris M."/>
            <person name="Harris N.L."/>
            <person name="Harvey D.A."/>
            <person name="Heiman T.J."/>
            <person name="Hernandez J.R."/>
            <person name="Houck J."/>
            <person name="Hostin D."/>
            <person name="Houston K.A."/>
            <person name="Howland T.J."/>
            <person name="Wei M.-H."/>
            <person name="Ibegwam C."/>
            <person name="Jalali M."/>
            <person name="Kalush F."/>
            <person name="Karpen G.H."/>
            <person name="Ke Z."/>
            <person name="Kennison J.A."/>
            <person name="Ketchum K.A."/>
            <person name="Kimmel B.E."/>
            <person name="Kodira C.D."/>
            <person name="Kraft C.L."/>
            <person name="Kravitz S."/>
            <person name="Kulp D."/>
            <person name="Lai Z."/>
            <person name="Lasko P."/>
            <person name="Lei Y."/>
            <person name="Levitsky A.A."/>
            <person name="Li J.H."/>
            <person name="Li Z."/>
            <person name="Liang Y."/>
            <person name="Lin X."/>
            <person name="Liu X."/>
            <person name="Mattei B."/>
            <person name="McIntosh T.C."/>
            <person name="McLeod M.P."/>
            <person name="McPherson D."/>
            <person name="Merkulov G."/>
            <person name="Milshina N.V."/>
            <person name="Mobarry C."/>
            <person name="Morris J."/>
            <person name="Moshrefi A."/>
            <person name="Mount S.M."/>
            <person name="Moy M."/>
            <person name="Murphy B."/>
            <person name="Murphy L."/>
            <person name="Muzny D.M."/>
            <person name="Nelson D.L."/>
            <person name="Nelson D.R."/>
            <person name="Nelson K.A."/>
            <person name="Nixon K."/>
            <person name="Nusskern D.R."/>
            <person name="Pacleb J.M."/>
            <person name="Palazzolo M."/>
            <person name="Pittman G.S."/>
            <person name="Pan S."/>
            <person name="Pollard J."/>
            <person name="Puri V."/>
            <person name="Reese M.G."/>
            <person name="Reinert K."/>
            <person name="Remington K."/>
            <person name="Saunders R.D.C."/>
            <person name="Scheeler F."/>
            <person name="Shen H."/>
            <person name="Shue B.C."/>
            <person name="Siden-Kiamos I."/>
            <person name="Simpson M."/>
            <person name="Skupski M.P."/>
            <person name="Smith T.J."/>
            <person name="Spier E."/>
            <person name="Spradling A.C."/>
            <person name="Stapleton M."/>
            <person name="Strong R."/>
            <person name="Sun E."/>
            <person name="Svirskas R."/>
            <person name="Tector C."/>
            <person name="Turner R."/>
            <person name="Venter E."/>
            <person name="Wang A.H."/>
            <person name="Wang X."/>
            <person name="Wang Z.-Y."/>
            <person name="Wassarman D.A."/>
            <person name="Weinstock G.M."/>
            <person name="Weissenbach J."/>
            <person name="Williams S.M."/>
            <person name="Woodage T."/>
            <person name="Worley K.C."/>
            <person name="Wu D."/>
            <person name="Yang S."/>
            <person name="Yao Q.A."/>
            <person name="Ye J."/>
            <person name="Yeh R.-F."/>
            <person name="Zaveri J.S."/>
            <person name="Zhan M."/>
            <person name="Zhang G."/>
            <person name="Zhao Q."/>
            <person name="Zheng L."/>
            <person name="Zheng X.H."/>
            <person name="Zhong F.N."/>
            <person name="Zhong W."/>
            <person name="Zhou X."/>
            <person name="Zhu S.C."/>
            <person name="Zhu X."/>
            <person name="Smith H.O."/>
            <person name="Gibbs R.A."/>
            <person name="Myers E.W."/>
            <person name="Rubin G.M."/>
            <person name="Venter J.C."/>
        </authorList>
    </citation>
    <scope>NUCLEOTIDE SEQUENCE [LARGE SCALE GENOMIC DNA]</scope>
    <source>
        <strain>Berkeley</strain>
    </source>
</reference>
<reference key="4">
    <citation type="journal article" date="2002" name="Genome Biol.">
        <title>Annotation of the Drosophila melanogaster euchromatic genome: a systematic review.</title>
        <authorList>
            <person name="Misra S."/>
            <person name="Crosby M.A."/>
            <person name="Mungall C.J."/>
            <person name="Matthews B.B."/>
            <person name="Campbell K.S."/>
            <person name="Hradecky P."/>
            <person name="Huang Y."/>
            <person name="Kaminker J.S."/>
            <person name="Millburn G.H."/>
            <person name="Prochnik S.E."/>
            <person name="Smith C.D."/>
            <person name="Tupy J.L."/>
            <person name="Whitfield E.J."/>
            <person name="Bayraktaroglu L."/>
            <person name="Berman B.P."/>
            <person name="Bettencourt B.R."/>
            <person name="Celniker S.E."/>
            <person name="de Grey A.D.N.J."/>
            <person name="Drysdale R.A."/>
            <person name="Harris N.L."/>
            <person name="Richter J."/>
            <person name="Russo S."/>
            <person name="Schroeder A.J."/>
            <person name="Shu S.Q."/>
            <person name="Stapleton M."/>
            <person name="Yamada C."/>
            <person name="Ashburner M."/>
            <person name="Gelbart W.M."/>
            <person name="Rubin G.M."/>
            <person name="Lewis S.E."/>
        </authorList>
    </citation>
    <scope>GENOME REANNOTATION</scope>
    <source>
        <strain>Berkeley</strain>
    </source>
</reference>
<reference key="5">
    <citation type="journal article" date="2002" name="Genome Biol.">
        <title>A Drosophila full-length cDNA resource.</title>
        <authorList>
            <person name="Stapleton M."/>
            <person name="Carlson J.W."/>
            <person name="Brokstein P."/>
            <person name="Yu C."/>
            <person name="Champe M."/>
            <person name="George R.A."/>
            <person name="Guarin H."/>
            <person name="Kronmiller B."/>
            <person name="Pacleb J.M."/>
            <person name="Park S."/>
            <person name="Wan K.H."/>
            <person name="Rubin G.M."/>
            <person name="Celniker S.E."/>
        </authorList>
    </citation>
    <scope>NUCLEOTIDE SEQUENCE [LARGE SCALE MRNA]</scope>
    <source>
        <strain>Berkeley</strain>
        <tissue>Embryo</tissue>
    </source>
</reference>
<feature type="chain" id="PRO_0000211239" description="General transcription factor IIF subunit 2">
    <location>
        <begin position="1"/>
        <end position="277"/>
    </location>
</feature>
<feature type="sequence conflict" description="In Ref. 2; AAA81888." evidence="2" ref="2">
    <original>VFSHMAPSDGKENSTTSAAQP</original>
    <variation>YSRTWHRPMARRTRLPRRHS</variation>
    <location>
        <begin position="97"/>
        <end position="117"/>
    </location>
</feature>
<proteinExistence type="evidence at transcript level"/>
<evidence type="ECO:0000269" key="1">
    <source>
    </source>
</evidence>
<evidence type="ECO:0000305" key="2"/>
<accession>P41900</accession>
<accession>Q9VGX4</accession>